<name>HXC6B_DANRE</name>
<accession>Q9PWM5</accession>
<accession>O57377</accession>
<accession>Q4PR82</accession>
<keyword id="KW-0217">Developmental protein</keyword>
<keyword id="KW-0238">DNA-binding</keyword>
<keyword id="KW-0371">Homeobox</keyword>
<keyword id="KW-0539">Nucleus</keyword>
<keyword id="KW-1185">Reference proteome</keyword>
<keyword id="KW-0804">Transcription</keyword>
<keyword id="KW-0805">Transcription regulation</keyword>
<proteinExistence type="evidence at transcript level"/>
<reference key="1">
    <citation type="journal article" date="1998" name="Science">
        <title>Zebrafish hox clusters and vertebrate genome evolution.</title>
        <authorList>
            <person name="Amores A."/>
            <person name="Force A."/>
            <person name="Yan Y.-L."/>
            <person name="Joly L."/>
            <person name="Amemiya C."/>
            <person name="Fritz A."/>
            <person name="Ho R.K."/>
            <person name="Langeland J."/>
            <person name="Prince V.E."/>
            <person name="Wang Y.-L."/>
            <person name="Westerfield M."/>
            <person name="Ekker M."/>
            <person name="Postlethwait J.H."/>
        </authorList>
    </citation>
    <scope>NUCLEOTIDE SEQUENCE [GENOMIC DNA]</scope>
</reference>
<reference key="2">
    <citation type="journal article" date="2005" name="Evol. Dev.">
        <title>Genomic annotation and transcriptome analysis of the zebrafish (Danio rerio) hox complex with description of a novel member, hoxb13a.</title>
        <authorList>
            <person name="Corredor-Adamez M."/>
            <person name="Welten M.C.M."/>
            <person name="Spaink H.P."/>
            <person name="Jeffery J.E."/>
            <person name="Schoon R.T."/>
            <person name="de Bakker M.A.G."/>
            <person name="Bagowski C.P."/>
            <person name="Meijer A.H."/>
            <person name="Verbeek F.J."/>
            <person name="Richardson M.K."/>
        </authorList>
    </citation>
    <scope>NUCLEOTIDE SEQUENCE [MRNA] OF 54-143</scope>
    <source>
        <strain>Tuebingen</strain>
    </source>
</reference>
<reference key="3">
    <citation type="journal article" date="1998" name="Development">
        <title>Zebrafish hox genes: genomic organization and modified colinear expression patterns in the trunk.</title>
        <authorList>
            <person name="Prince V.E."/>
            <person name="Joly L."/>
            <person name="Ekker M."/>
            <person name="Ho R.K."/>
        </authorList>
    </citation>
    <scope>NUCLEOTIDE SEQUENCE [MRNA] OF 136-227</scope>
    <scope>DEVELOPMENTAL STAGE</scope>
    <source>
        <tissue>Embryo</tissue>
    </source>
</reference>
<reference key="4">
    <citation type="journal article" date="2004" name="Dev. Biol.">
        <title>Differences in expression pattern and function between zebrafish hoxc13 orthologs: recruitment of Hoxc13b into an early embryonic role.</title>
        <authorList>
            <person name="Thummel R."/>
            <person name="Li L."/>
            <person name="Tanase C."/>
            <person name="Sarras M.P. Jr."/>
            <person name="Godwin A.R."/>
        </authorList>
    </citation>
    <scope>DEVELOPMENTAL STAGE</scope>
</reference>
<evidence type="ECO:0000250" key="1"/>
<evidence type="ECO:0000255" key="2">
    <source>
        <dbReference type="PROSITE-ProRule" id="PRU00108"/>
    </source>
</evidence>
<evidence type="ECO:0000256" key="3">
    <source>
        <dbReference type="SAM" id="MobiDB-lite"/>
    </source>
</evidence>
<evidence type="ECO:0000269" key="4">
    <source>
    </source>
</evidence>
<evidence type="ECO:0000269" key="5">
    <source>
    </source>
</evidence>
<evidence type="ECO:0000305" key="6"/>
<feature type="chain" id="PRO_0000200178" description="Homeobox protein Hox-C6b">
    <location>
        <begin position="1"/>
        <end position="227"/>
    </location>
</feature>
<feature type="DNA-binding region" description="Homeobox" evidence="2">
    <location>
        <begin position="135"/>
        <end position="194"/>
    </location>
</feature>
<feature type="region of interest" description="Disordered" evidence="3">
    <location>
        <begin position="200"/>
        <end position="227"/>
    </location>
</feature>
<feature type="short sequence motif" description="Antp-type hexapeptide">
    <location>
        <begin position="117"/>
        <end position="122"/>
    </location>
</feature>
<feature type="compositionally biased region" description="Basic and acidic residues" evidence="3">
    <location>
        <begin position="211"/>
        <end position="227"/>
    </location>
</feature>
<feature type="sequence conflict" description="In Ref. 2; AAY67939." evidence="6" ref="2">
    <original>V</original>
    <variation>M</variation>
    <location>
        <position position="109"/>
    </location>
</feature>
<feature type="sequence conflict" description="In Ref. 2; AAY67939." evidence="6" ref="2">
    <original>V</original>
    <variation>S</variation>
    <location>
        <position position="114"/>
    </location>
</feature>
<feature type="sequence conflict" description="In Ref. 2; AAY67939." evidence="6" ref="2">
    <original>R</original>
    <variation>SG</variation>
    <location>
        <position position="128"/>
    </location>
</feature>
<feature type="sequence conflict" description="In Ref. 2; AAY67939." evidence="6" ref="2">
    <original>R</original>
    <variation>Q</variation>
    <location>
        <position position="137"/>
    </location>
</feature>
<dbReference type="EMBL" id="AF071266">
    <property type="protein sequence ID" value="AAD15959.1"/>
    <property type="molecule type" value="Genomic_DNA"/>
</dbReference>
<dbReference type="EMBL" id="DQ060561">
    <property type="protein sequence ID" value="AAY67939.1"/>
    <property type="molecule type" value="mRNA"/>
</dbReference>
<dbReference type="EMBL" id="Y14537">
    <property type="protein sequence ID" value="CAA74872.1"/>
    <property type="molecule type" value="mRNA"/>
</dbReference>
<dbReference type="SMR" id="Q9PWM5"/>
<dbReference type="FunCoup" id="Q9PWM5">
    <property type="interactions" value="4"/>
</dbReference>
<dbReference type="STRING" id="7955.ENSDARP00000157370"/>
<dbReference type="PaxDb" id="7955-ENSDARP00000067697"/>
<dbReference type="AGR" id="ZFIN:ZDB-GENE-000822-1"/>
<dbReference type="ZFIN" id="ZDB-GENE-000822-1">
    <property type="gene designation" value="hoxc6b"/>
</dbReference>
<dbReference type="eggNOG" id="KOG0489">
    <property type="taxonomic scope" value="Eukaryota"/>
</dbReference>
<dbReference type="InParanoid" id="Q9PWM5"/>
<dbReference type="PRO" id="PR:Q9PWM5"/>
<dbReference type="Proteomes" id="UP000000437">
    <property type="component" value="Unplaced"/>
</dbReference>
<dbReference type="GO" id="GO:0005634">
    <property type="term" value="C:nucleus"/>
    <property type="evidence" value="ECO:0000318"/>
    <property type="project" value="GO_Central"/>
</dbReference>
<dbReference type="GO" id="GO:0000981">
    <property type="term" value="F:DNA-binding transcription factor activity, RNA polymerase II-specific"/>
    <property type="evidence" value="ECO:0000318"/>
    <property type="project" value="GO_Central"/>
</dbReference>
<dbReference type="GO" id="GO:0000978">
    <property type="term" value="F:RNA polymerase II cis-regulatory region sequence-specific DNA binding"/>
    <property type="evidence" value="ECO:0000318"/>
    <property type="project" value="GO_Central"/>
</dbReference>
<dbReference type="GO" id="GO:0009952">
    <property type="term" value="P:anterior/posterior pattern specification"/>
    <property type="evidence" value="ECO:0000318"/>
    <property type="project" value="GO_Central"/>
</dbReference>
<dbReference type="GO" id="GO:0006357">
    <property type="term" value="P:regulation of transcription by RNA polymerase II"/>
    <property type="evidence" value="ECO:0000318"/>
    <property type="project" value="GO_Central"/>
</dbReference>
<dbReference type="CDD" id="cd00086">
    <property type="entry name" value="homeodomain"/>
    <property type="match status" value="1"/>
</dbReference>
<dbReference type="FunFam" id="1.10.10.60:FF:000017">
    <property type="entry name" value="Homeobox protein antennapedia"/>
    <property type="match status" value="1"/>
</dbReference>
<dbReference type="Gene3D" id="1.10.10.60">
    <property type="entry name" value="Homeodomain-like"/>
    <property type="match status" value="1"/>
</dbReference>
<dbReference type="InterPro" id="IPR050296">
    <property type="entry name" value="Antp_homeobox"/>
</dbReference>
<dbReference type="InterPro" id="IPR001356">
    <property type="entry name" value="HD"/>
</dbReference>
<dbReference type="InterPro" id="IPR020479">
    <property type="entry name" value="HD_metazoa"/>
</dbReference>
<dbReference type="InterPro" id="IPR001827">
    <property type="entry name" value="Homeobox_Antennapedia_CS"/>
</dbReference>
<dbReference type="InterPro" id="IPR017970">
    <property type="entry name" value="Homeobox_CS"/>
</dbReference>
<dbReference type="InterPro" id="IPR009057">
    <property type="entry name" value="Homeodomain-like_sf"/>
</dbReference>
<dbReference type="PANTHER" id="PTHR45659">
    <property type="entry name" value="HOMEOBOX PROTEIN HOX"/>
    <property type="match status" value="1"/>
</dbReference>
<dbReference type="PANTHER" id="PTHR45659:SF10">
    <property type="entry name" value="HOMEOBOX PROTEIN HOX-A5"/>
    <property type="match status" value="1"/>
</dbReference>
<dbReference type="Pfam" id="PF00046">
    <property type="entry name" value="Homeodomain"/>
    <property type="match status" value="1"/>
</dbReference>
<dbReference type="PRINTS" id="PR00024">
    <property type="entry name" value="HOMEOBOX"/>
</dbReference>
<dbReference type="SMART" id="SM00389">
    <property type="entry name" value="HOX"/>
    <property type="match status" value="1"/>
</dbReference>
<dbReference type="SUPFAM" id="SSF46689">
    <property type="entry name" value="Homeodomain-like"/>
    <property type="match status" value="1"/>
</dbReference>
<dbReference type="PROSITE" id="PS00032">
    <property type="entry name" value="ANTENNAPEDIA"/>
    <property type="match status" value="1"/>
</dbReference>
<dbReference type="PROSITE" id="PS00027">
    <property type="entry name" value="HOMEOBOX_1"/>
    <property type="match status" value="1"/>
</dbReference>
<dbReference type="PROSITE" id="PS50071">
    <property type="entry name" value="HOMEOBOX_2"/>
    <property type="match status" value="1"/>
</dbReference>
<organism>
    <name type="scientific">Danio rerio</name>
    <name type="common">Zebrafish</name>
    <name type="synonym">Brachydanio rerio</name>
    <dbReference type="NCBI Taxonomy" id="7955"/>
    <lineage>
        <taxon>Eukaryota</taxon>
        <taxon>Metazoa</taxon>
        <taxon>Chordata</taxon>
        <taxon>Craniata</taxon>
        <taxon>Vertebrata</taxon>
        <taxon>Euteleostomi</taxon>
        <taxon>Actinopterygii</taxon>
        <taxon>Neopterygii</taxon>
        <taxon>Teleostei</taxon>
        <taxon>Ostariophysi</taxon>
        <taxon>Cypriniformes</taxon>
        <taxon>Danionidae</taxon>
        <taxon>Danioninae</taxon>
        <taxon>Danio</taxon>
    </lineage>
</organism>
<sequence>MNSYFTNPSLSCHLNSGQEVLPSVAISSTNYDPVRHFSPYGAAVAQNRIYSNPFYSHQENVMFGSSRPYDYGSNMFYQDKDVLPSCRQGFGQTQGSLTQDYASDQGKTVEPKGVVQIYPWMQRMNSHRVGYGSDRRRGRQIYSRYQTLELEKEFHYNRYLTRRRRIEIANTLCLSERQIKIWFQNRRMKWKKESNLTSILNDNGSVGAGQDTDKEETGETAEKDEHD</sequence>
<gene>
    <name type="primary">hoxc6b</name>
    <name type="synonym">hoxy6</name>
</gene>
<protein>
    <recommendedName>
        <fullName>Homeobox protein Hox-C6b</fullName>
    </recommendedName>
</protein>
<comment type="function">
    <text evidence="1">Sequence-specific transcription factor which is part of a developmental regulatory system that provides cells with specific positional identities on the anterior-posterior axis.</text>
</comment>
<comment type="subcellular location">
    <subcellularLocation>
        <location evidence="2">Nucleus</location>
    </subcellularLocation>
</comment>
<comment type="developmental stage">
    <text evidence="4 5">Expressed both maternally and zygotically, from ova through to 48 hours post-fertilization. At the 10-somite stage, expressed in the paraxial mesoderm with an anterior expression limit at somite 5. At the 20-somite stage, expressed in the developing CNS with an anterior expression adjacent to the somite 3/4 boundary.</text>
</comment>
<comment type="similarity">
    <text evidence="6">Belongs to the Antp homeobox family.</text>
</comment>